<name>ISPG_VIBA3</name>
<feature type="chain" id="PRO_1000123463" description="4-hydroxy-3-methylbut-2-en-1-yl diphosphate synthase (flavodoxin)">
    <location>
        <begin position="1"/>
        <end position="373"/>
    </location>
</feature>
<feature type="binding site" evidence="1">
    <location>
        <position position="270"/>
    </location>
    <ligand>
        <name>[4Fe-4S] cluster</name>
        <dbReference type="ChEBI" id="CHEBI:49883"/>
    </ligand>
</feature>
<feature type="binding site" evidence="1">
    <location>
        <position position="273"/>
    </location>
    <ligand>
        <name>[4Fe-4S] cluster</name>
        <dbReference type="ChEBI" id="CHEBI:49883"/>
    </ligand>
</feature>
<feature type="binding site" evidence="1">
    <location>
        <position position="305"/>
    </location>
    <ligand>
        <name>[4Fe-4S] cluster</name>
        <dbReference type="ChEBI" id="CHEBI:49883"/>
    </ligand>
</feature>
<feature type="binding site" evidence="1">
    <location>
        <position position="312"/>
    </location>
    <ligand>
        <name>[4Fe-4S] cluster</name>
        <dbReference type="ChEBI" id="CHEBI:49883"/>
    </ligand>
</feature>
<gene>
    <name evidence="1" type="primary">ispG</name>
    <name type="ordered locus">VS_0619</name>
</gene>
<evidence type="ECO:0000255" key="1">
    <source>
        <dbReference type="HAMAP-Rule" id="MF_00159"/>
    </source>
</evidence>
<accession>B7VJT8</accession>
<sequence length="373" mass="40607">MQHESPIIRRKSTRIYVGDVPIGDGAPIAVQSMTNTRTTDVAATVAQIRALEKVGADIVRVSVPTMDAAEAFKLIKQQVSVPLVADIHFDYRIALKVAEYGVDCLRINPGNIGNESRIRSVVDCARDMNIPIRIGVNGGSLEKEIQEKYTEPTAEALVESAMRHVDILDRLNFDQFKVSVKASDVFLAVGSYRLLAKQIDQPLHLGITEAGGARAGSVKSAVGLGMLLSEGIGDTLRISLAADPVEEIKVGFDILKSLRIRSRGINFIACPSCSRQEFDVINTVNALEERLEDVITPMDVSIIGCVVNGPGEAEVSHLGLAGSARKSAFYEDGKRQKERFDNDDLVDKLEAKIRAKASVLDKANRIDVENLED</sequence>
<reference key="1">
    <citation type="submission" date="2009-02" db="EMBL/GenBank/DDBJ databases">
        <title>Vibrio splendidus str. LGP32 complete genome.</title>
        <authorList>
            <person name="Mazel D."/>
            <person name="Le Roux F."/>
        </authorList>
    </citation>
    <scope>NUCLEOTIDE SEQUENCE [LARGE SCALE GENOMIC DNA]</scope>
    <source>
        <strain>LGP32</strain>
    </source>
</reference>
<organism>
    <name type="scientific">Vibrio atlanticus (strain LGP32)</name>
    <name type="common">Vibrio splendidus (strain Mel32)</name>
    <dbReference type="NCBI Taxonomy" id="575788"/>
    <lineage>
        <taxon>Bacteria</taxon>
        <taxon>Pseudomonadati</taxon>
        <taxon>Pseudomonadota</taxon>
        <taxon>Gammaproteobacteria</taxon>
        <taxon>Vibrionales</taxon>
        <taxon>Vibrionaceae</taxon>
        <taxon>Vibrio</taxon>
    </lineage>
</organism>
<keyword id="KW-0004">4Fe-4S</keyword>
<keyword id="KW-0408">Iron</keyword>
<keyword id="KW-0411">Iron-sulfur</keyword>
<keyword id="KW-0414">Isoprene biosynthesis</keyword>
<keyword id="KW-0479">Metal-binding</keyword>
<keyword id="KW-0560">Oxidoreductase</keyword>
<dbReference type="EC" id="1.17.7.3" evidence="1"/>
<dbReference type="EMBL" id="FM954972">
    <property type="protein sequence ID" value="CAV17613.1"/>
    <property type="molecule type" value="Genomic_DNA"/>
</dbReference>
<dbReference type="SMR" id="B7VJT8"/>
<dbReference type="STRING" id="575788.VS_0619"/>
<dbReference type="KEGG" id="vsp:VS_0619"/>
<dbReference type="eggNOG" id="COG0821">
    <property type="taxonomic scope" value="Bacteria"/>
</dbReference>
<dbReference type="HOGENOM" id="CLU_042258_0_0_6"/>
<dbReference type="UniPathway" id="UPA00056">
    <property type="reaction ID" value="UER00096"/>
</dbReference>
<dbReference type="Proteomes" id="UP000009100">
    <property type="component" value="Chromosome 1"/>
</dbReference>
<dbReference type="GO" id="GO:0051539">
    <property type="term" value="F:4 iron, 4 sulfur cluster binding"/>
    <property type="evidence" value="ECO:0007669"/>
    <property type="project" value="UniProtKB-UniRule"/>
</dbReference>
<dbReference type="GO" id="GO:0046429">
    <property type="term" value="F:4-hydroxy-3-methylbut-2-en-1-yl diphosphate synthase activity (ferredoxin)"/>
    <property type="evidence" value="ECO:0007669"/>
    <property type="project" value="UniProtKB-UniRule"/>
</dbReference>
<dbReference type="GO" id="GO:0141197">
    <property type="term" value="F:4-hydroxy-3-methylbut-2-enyl-diphosphate synthase activity (flavodoxin)"/>
    <property type="evidence" value="ECO:0007669"/>
    <property type="project" value="UniProtKB-EC"/>
</dbReference>
<dbReference type="GO" id="GO:0005506">
    <property type="term" value="F:iron ion binding"/>
    <property type="evidence" value="ECO:0007669"/>
    <property type="project" value="InterPro"/>
</dbReference>
<dbReference type="GO" id="GO:0019288">
    <property type="term" value="P:isopentenyl diphosphate biosynthetic process, methylerythritol 4-phosphate pathway"/>
    <property type="evidence" value="ECO:0007669"/>
    <property type="project" value="UniProtKB-UniRule"/>
</dbReference>
<dbReference type="GO" id="GO:0016114">
    <property type="term" value="P:terpenoid biosynthetic process"/>
    <property type="evidence" value="ECO:0007669"/>
    <property type="project" value="InterPro"/>
</dbReference>
<dbReference type="FunFam" id="3.20.20.20:FF:000001">
    <property type="entry name" value="4-hydroxy-3-methylbut-2-en-1-yl diphosphate synthase (flavodoxin)"/>
    <property type="match status" value="1"/>
</dbReference>
<dbReference type="FunFam" id="3.30.413.10:FF:000002">
    <property type="entry name" value="4-hydroxy-3-methylbut-2-en-1-yl diphosphate synthase (flavodoxin)"/>
    <property type="match status" value="1"/>
</dbReference>
<dbReference type="Gene3D" id="3.20.20.20">
    <property type="entry name" value="Dihydropteroate synthase-like"/>
    <property type="match status" value="1"/>
</dbReference>
<dbReference type="Gene3D" id="3.30.413.10">
    <property type="entry name" value="Sulfite Reductase Hemoprotein, domain 1"/>
    <property type="match status" value="1"/>
</dbReference>
<dbReference type="HAMAP" id="MF_00159">
    <property type="entry name" value="IspG"/>
    <property type="match status" value="1"/>
</dbReference>
<dbReference type="InterPro" id="IPR011005">
    <property type="entry name" value="Dihydropteroate_synth-like_sf"/>
</dbReference>
<dbReference type="InterPro" id="IPR016425">
    <property type="entry name" value="IspG_bac"/>
</dbReference>
<dbReference type="InterPro" id="IPR004588">
    <property type="entry name" value="IspG_bac-typ"/>
</dbReference>
<dbReference type="InterPro" id="IPR045854">
    <property type="entry name" value="NO2/SO3_Rdtase_4Fe4S_sf"/>
</dbReference>
<dbReference type="NCBIfam" id="TIGR00612">
    <property type="entry name" value="ispG_gcpE"/>
    <property type="match status" value="1"/>
</dbReference>
<dbReference type="NCBIfam" id="NF001540">
    <property type="entry name" value="PRK00366.1"/>
    <property type="match status" value="1"/>
</dbReference>
<dbReference type="PANTHER" id="PTHR30454">
    <property type="entry name" value="4-HYDROXY-3-METHYLBUT-2-EN-1-YL DIPHOSPHATE SYNTHASE"/>
    <property type="match status" value="1"/>
</dbReference>
<dbReference type="PANTHER" id="PTHR30454:SF0">
    <property type="entry name" value="4-HYDROXY-3-METHYLBUT-2-EN-1-YL DIPHOSPHATE SYNTHASE (FERREDOXIN), CHLOROPLASTIC"/>
    <property type="match status" value="1"/>
</dbReference>
<dbReference type="Pfam" id="PF04551">
    <property type="entry name" value="GcpE"/>
    <property type="match status" value="1"/>
</dbReference>
<dbReference type="PIRSF" id="PIRSF004640">
    <property type="entry name" value="IspG"/>
    <property type="match status" value="1"/>
</dbReference>
<dbReference type="SUPFAM" id="SSF51717">
    <property type="entry name" value="Dihydropteroate synthetase-like"/>
    <property type="match status" value="1"/>
</dbReference>
<dbReference type="SUPFAM" id="SSF56014">
    <property type="entry name" value="Nitrite and sulphite reductase 4Fe-4S domain-like"/>
    <property type="match status" value="1"/>
</dbReference>
<protein>
    <recommendedName>
        <fullName evidence="1">4-hydroxy-3-methylbut-2-en-1-yl diphosphate synthase (flavodoxin)</fullName>
        <ecNumber evidence="1">1.17.7.3</ecNumber>
    </recommendedName>
    <alternativeName>
        <fullName evidence="1">1-hydroxy-2-methyl-2-(E)-butenyl 4-diphosphate synthase</fullName>
    </alternativeName>
</protein>
<proteinExistence type="inferred from homology"/>
<comment type="function">
    <text evidence="1">Converts 2C-methyl-D-erythritol 2,4-cyclodiphosphate (ME-2,4cPP) into 1-hydroxy-2-methyl-2-(E)-butenyl 4-diphosphate.</text>
</comment>
<comment type="catalytic activity">
    <reaction evidence="1">
        <text>(2E)-4-hydroxy-3-methylbut-2-enyl diphosphate + oxidized [flavodoxin] + H2O + 2 H(+) = 2-C-methyl-D-erythritol 2,4-cyclic diphosphate + reduced [flavodoxin]</text>
        <dbReference type="Rhea" id="RHEA:43604"/>
        <dbReference type="Rhea" id="RHEA-COMP:10622"/>
        <dbReference type="Rhea" id="RHEA-COMP:10623"/>
        <dbReference type="ChEBI" id="CHEBI:15377"/>
        <dbReference type="ChEBI" id="CHEBI:15378"/>
        <dbReference type="ChEBI" id="CHEBI:57618"/>
        <dbReference type="ChEBI" id="CHEBI:58210"/>
        <dbReference type="ChEBI" id="CHEBI:58483"/>
        <dbReference type="ChEBI" id="CHEBI:128753"/>
        <dbReference type="EC" id="1.17.7.3"/>
    </reaction>
</comment>
<comment type="cofactor">
    <cofactor evidence="1">
        <name>[4Fe-4S] cluster</name>
        <dbReference type="ChEBI" id="CHEBI:49883"/>
    </cofactor>
    <text evidence="1">Binds 1 [4Fe-4S] cluster.</text>
</comment>
<comment type="pathway">
    <text evidence="1">Isoprenoid biosynthesis; isopentenyl diphosphate biosynthesis via DXP pathway; isopentenyl diphosphate from 1-deoxy-D-xylulose 5-phosphate: step 5/6.</text>
</comment>
<comment type="similarity">
    <text evidence="1">Belongs to the IspG family.</text>
</comment>